<comment type="function">
    <text evidence="1">Catalyzes the catabolism of the allantoin degradation intermediate (S)-ureidoglycolate, generating urea and glyoxylate. Involved in the utilization of allantoin as nitrogen source.</text>
</comment>
<comment type="catalytic activity">
    <reaction evidence="1">
        <text>(S)-ureidoglycolate = urea + glyoxylate</text>
        <dbReference type="Rhea" id="RHEA:11304"/>
        <dbReference type="ChEBI" id="CHEBI:16199"/>
        <dbReference type="ChEBI" id="CHEBI:36655"/>
        <dbReference type="ChEBI" id="CHEBI:57296"/>
        <dbReference type="EC" id="4.3.2.3"/>
    </reaction>
</comment>
<comment type="cofactor">
    <cofactor evidence="1">
        <name>Ni(2+)</name>
        <dbReference type="ChEBI" id="CHEBI:49786"/>
    </cofactor>
</comment>
<comment type="pathway">
    <text evidence="1">Nitrogen metabolism; (S)-allantoin degradation.</text>
</comment>
<comment type="subunit">
    <text evidence="1">Homodimer.</text>
</comment>
<comment type="similarity">
    <text evidence="1">Belongs to the ureidoglycolate lyase family.</text>
</comment>
<name>ALLA_SALPA</name>
<feature type="chain" id="PRO_1000061368" description="Ureidoglycolate lyase">
    <location>
        <begin position="1"/>
        <end position="160"/>
    </location>
</feature>
<dbReference type="EC" id="4.3.2.3" evidence="1"/>
<dbReference type="EMBL" id="CP000026">
    <property type="protein sequence ID" value="AAV78094.1"/>
    <property type="molecule type" value="Genomic_DNA"/>
</dbReference>
<dbReference type="RefSeq" id="WP_000764659.1">
    <property type="nucleotide sequence ID" value="NC_006511.1"/>
</dbReference>
<dbReference type="SMR" id="Q5PCF4"/>
<dbReference type="KEGG" id="spt:SPA2207"/>
<dbReference type="HOGENOM" id="CLU_070848_1_1_6"/>
<dbReference type="UniPathway" id="UPA00395"/>
<dbReference type="Proteomes" id="UP000008185">
    <property type="component" value="Chromosome"/>
</dbReference>
<dbReference type="GO" id="GO:0004848">
    <property type="term" value="F:ureidoglycolate hydrolase activity"/>
    <property type="evidence" value="ECO:0007669"/>
    <property type="project" value="InterPro"/>
</dbReference>
<dbReference type="GO" id="GO:0050385">
    <property type="term" value="F:ureidoglycolate lyase activity"/>
    <property type="evidence" value="ECO:0007669"/>
    <property type="project" value="UniProtKB-UniRule"/>
</dbReference>
<dbReference type="GO" id="GO:0000256">
    <property type="term" value="P:allantoin catabolic process"/>
    <property type="evidence" value="ECO:0007669"/>
    <property type="project" value="UniProtKB-UniRule"/>
</dbReference>
<dbReference type="GO" id="GO:0006145">
    <property type="term" value="P:purine nucleobase catabolic process"/>
    <property type="evidence" value="ECO:0007669"/>
    <property type="project" value="UniProtKB-UniRule"/>
</dbReference>
<dbReference type="CDD" id="cd20298">
    <property type="entry name" value="cupin_UAH"/>
    <property type="match status" value="1"/>
</dbReference>
<dbReference type="FunFam" id="2.60.120.480:FF:000001">
    <property type="entry name" value="Ureidoglycolate lyase"/>
    <property type="match status" value="1"/>
</dbReference>
<dbReference type="Gene3D" id="2.60.120.480">
    <property type="entry name" value="Ureidoglycolate hydrolase"/>
    <property type="match status" value="1"/>
</dbReference>
<dbReference type="HAMAP" id="MF_00616">
    <property type="entry name" value="Ureidogly_lyase"/>
    <property type="match status" value="1"/>
</dbReference>
<dbReference type="InterPro" id="IPR011051">
    <property type="entry name" value="RmlC_Cupin_sf"/>
</dbReference>
<dbReference type="InterPro" id="IPR047233">
    <property type="entry name" value="UAH_cupin"/>
</dbReference>
<dbReference type="InterPro" id="IPR007247">
    <property type="entry name" value="Ureidogly_lyase"/>
</dbReference>
<dbReference type="InterPro" id="IPR023525">
    <property type="entry name" value="Ureidogly_lyase_bac"/>
</dbReference>
<dbReference type="InterPro" id="IPR024060">
    <property type="entry name" value="Ureidoglycolate_lyase_dom_sf"/>
</dbReference>
<dbReference type="NCBIfam" id="NF002948">
    <property type="entry name" value="PRK03606.1-1"/>
    <property type="match status" value="1"/>
</dbReference>
<dbReference type="NCBIfam" id="NF009932">
    <property type="entry name" value="PRK13395.1"/>
    <property type="match status" value="1"/>
</dbReference>
<dbReference type="PANTHER" id="PTHR21221">
    <property type="entry name" value="UREIDOGLYCOLATE HYDROLASE"/>
    <property type="match status" value="1"/>
</dbReference>
<dbReference type="PANTHER" id="PTHR21221:SF1">
    <property type="entry name" value="UREIDOGLYCOLATE LYASE"/>
    <property type="match status" value="1"/>
</dbReference>
<dbReference type="Pfam" id="PF04115">
    <property type="entry name" value="Ureidogly_lyase"/>
    <property type="match status" value="1"/>
</dbReference>
<dbReference type="PIRSF" id="PIRSF017306">
    <property type="entry name" value="Ureidogly_hydro"/>
    <property type="match status" value="1"/>
</dbReference>
<dbReference type="SUPFAM" id="SSF51182">
    <property type="entry name" value="RmlC-like cupins"/>
    <property type="match status" value="1"/>
</dbReference>
<protein>
    <recommendedName>
        <fullName evidence="1">Ureidoglycolate lyase</fullName>
        <ecNumber evidence="1">4.3.2.3</ecNumber>
    </recommendedName>
    <alternativeName>
        <fullName evidence="1">Ureidoglycolatase</fullName>
    </alternativeName>
</protein>
<proteinExistence type="inferred from homology"/>
<gene>
    <name evidence="1" type="primary">allA</name>
    <name type="ordered locus">SPA2207</name>
</gene>
<accession>Q5PCF4</accession>
<sequence>MKLEVLPLDQKTFSAYGDVIETQERDFFHINNGLVERYHDLAKVEVLEQDRTLISINRAQPAAMPIVVHELERHPLGTQAFVPMNGEAFVVIVALGDDKPDLSTLRAFISNGRQGVNYHRNVWHHPLFAWQTVTDFLTVDRGGSDNCDVESIPTHELCFA</sequence>
<keyword id="KW-0456">Lyase</keyword>
<keyword id="KW-0659">Purine metabolism</keyword>
<organism>
    <name type="scientific">Salmonella paratyphi A (strain ATCC 9150 / SARB42)</name>
    <dbReference type="NCBI Taxonomy" id="295319"/>
    <lineage>
        <taxon>Bacteria</taxon>
        <taxon>Pseudomonadati</taxon>
        <taxon>Pseudomonadota</taxon>
        <taxon>Gammaproteobacteria</taxon>
        <taxon>Enterobacterales</taxon>
        <taxon>Enterobacteriaceae</taxon>
        <taxon>Salmonella</taxon>
    </lineage>
</organism>
<evidence type="ECO:0000255" key="1">
    <source>
        <dbReference type="HAMAP-Rule" id="MF_00616"/>
    </source>
</evidence>
<reference key="1">
    <citation type="journal article" date="2004" name="Nat. Genet.">
        <title>Comparison of genome degradation in Paratyphi A and Typhi, human-restricted serovars of Salmonella enterica that cause typhoid.</title>
        <authorList>
            <person name="McClelland M."/>
            <person name="Sanderson K.E."/>
            <person name="Clifton S.W."/>
            <person name="Latreille P."/>
            <person name="Porwollik S."/>
            <person name="Sabo A."/>
            <person name="Meyer R."/>
            <person name="Bieri T."/>
            <person name="Ozersky P."/>
            <person name="McLellan M."/>
            <person name="Harkins C.R."/>
            <person name="Wang C."/>
            <person name="Nguyen C."/>
            <person name="Berghoff A."/>
            <person name="Elliott G."/>
            <person name="Kohlberg S."/>
            <person name="Strong C."/>
            <person name="Du F."/>
            <person name="Carter J."/>
            <person name="Kremizki C."/>
            <person name="Layman D."/>
            <person name="Leonard S."/>
            <person name="Sun H."/>
            <person name="Fulton L."/>
            <person name="Nash W."/>
            <person name="Miner T."/>
            <person name="Minx P."/>
            <person name="Delehaunty K."/>
            <person name="Fronick C."/>
            <person name="Magrini V."/>
            <person name="Nhan M."/>
            <person name="Warren W."/>
            <person name="Florea L."/>
            <person name="Spieth J."/>
            <person name="Wilson R.K."/>
        </authorList>
    </citation>
    <scope>NUCLEOTIDE SEQUENCE [LARGE SCALE GENOMIC DNA]</scope>
    <source>
        <strain>ATCC 9150 / SARB42</strain>
    </source>
</reference>